<dbReference type="EC" id="7.1.2.2" evidence="1"/>
<dbReference type="EMBL" id="CP000142">
    <property type="protein sequence ID" value="ABA90231.1"/>
    <property type="molecule type" value="Genomic_DNA"/>
</dbReference>
<dbReference type="RefSeq" id="WP_011342784.1">
    <property type="nucleotide sequence ID" value="NC_007498.2"/>
</dbReference>
<dbReference type="SMR" id="Q3A076"/>
<dbReference type="STRING" id="338963.Pcar_2996"/>
<dbReference type="KEGG" id="pca:Pcar_2996"/>
<dbReference type="eggNOG" id="COG0056">
    <property type="taxonomic scope" value="Bacteria"/>
</dbReference>
<dbReference type="HOGENOM" id="CLU_010091_2_1_7"/>
<dbReference type="OrthoDB" id="9803053at2"/>
<dbReference type="Proteomes" id="UP000002534">
    <property type="component" value="Chromosome"/>
</dbReference>
<dbReference type="GO" id="GO:0005886">
    <property type="term" value="C:plasma membrane"/>
    <property type="evidence" value="ECO:0007669"/>
    <property type="project" value="UniProtKB-SubCell"/>
</dbReference>
<dbReference type="GO" id="GO:0045259">
    <property type="term" value="C:proton-transporting ATP synthase complex"/>
    <property type="evidence" value="ECO:0007669"/>
    <property type="project" value="UniProtKB-KW"/>
</dbReference>
<dbReference type="GO" id="GO:0043531">
    <property type="term" value="F:ADP binding"/>
    <property type="evidence" value="ECO:0007669"/>
    <property type="project" value="TreeGrafter"/>
</dbReference>
<dbReference type="GO" id="GO:0005524">
    <property type="term" value="F:ATP binding"/>
    <property type="evidence" value="ECO:0007669"/>
    <property type="project" value="UniProtKB-UniRule"/>
</dbReference>
<dbReference type="GO" id="GO:0046933">
    <property type="term" value="F:proton-transporting ATP synthase activity, rotational mechanism"/>
    <property type="evidence" value="ECO:0007669"/>
    <property type="project" value="UniProtKB-UniRule"/>
</dbReference>
<dbReference type="CDD" id="cd18113">
    <property type="entry name" value="ATP-synt_F1_alpha_C"/>
    <property type="match status" value="1"/>
</dbReference>
<dbReference type="CDD" id="cd18116">
    <property type="entry name" value="ATP-synt_F1_alpha_N"/>
    <property type="match status" value="1"/>
</dbReference>
<dbReference type="CDD" id="cd01132">
    <property type="entry name" value="F1-ATPase_alpha_CD"/>
    <property type="match status" value="1"/>
</dbReference>
<dbReference type="FunFam" id="3.40.50.300:FF:000002">
    <property type="entry name" value="ATP synthase subunit alpha"/>
    <property type="match status" value="1"/>
</dbReference>
<dbReference type="Gene3D" id="2.40.30.20">
    <property type="match status" value="1"/>
</dbReference>
<dbReference type="Gene3D" id="1.20.150.20">
    <property type="entry name" value="ATP synthase alpha/beta chain, C-terminal domain"/>
    <property type="match status" value="1"/>
</dbReference>
<dbReference type="Gene3D" id="3.40.50.300">
    <property type="entry name" value="P-loop containing nucleotide triphosphate hydrolases"/>
    <property type="match status" value="1"/>
</dbReference>
<dbReference type="HAMAP" id="MF_01346">
    <property type="entry name" value="ATP_synth_alpha_bact"/>
    <property type="match status" value="1"/>
</dbReference>
<dbReference type="InterPro" id="IPR017710">
    <property type="entry name" value="Alt_ATP_synth_F1_asu"/>
</dbReference>
<dbReference type="InterPro" id="IPR023366">
    <property type="entry name" value="ATP_synth_asu-like_sf"/>
</dbReference>
<dbReference type="InterPro" id="IPR000793">
    <property type="entry name" value="ATP_synth_asu_C"/>
</dbReference>
<dbReference type="InterPro" id="IPR038376">
    <property type="entry name" value="ATP_synth_asu_C_sf"/>
</dbReference>
<dbReference type="InterPro" id="IPR033732">
    <property type="entry name" value="ATP_synth_F1_a_nt-bd_dom"/>
</dbReference>
<dbReference type="InterPro" id="IPR005294">
    <property type="entry name" value="ATP_synth_F1_asu"/>
</dbReference>
<dbReference type="InterPro" id="IPR020003">
    <property type="entry name" value="ATPase_a/bsu_AS"/>
</dbReference>
<dbReference type="InterPro" id="IPR004100">
    <property type="entry name" value="ATPase_F1/V1/A1_a/bsu_N"/>
</dbReference>
<dbReference type="InterPro" id="IPR036121">
    <property type="entry name" value="ATPase_F1/V1/A1_a/bsu_N_sf"/>
</dbReference>
<dbReference type="InterPro" id="IPR000194">
    <property type="entry name" value="ATPase_F1/V1/A1_a/bsu_nucl-bd"/>
</dbReference>
<dbReference type="InterPro" id="IPR027417">
    <property type="entry name" value="P-loop_NTPase"/>
</dbReference>
<dbReference type="NCBIfam" id="TIGR03324">
    <property type="entry name" value="alt_F1F0_F1_al"/>
    <property type="match status" value="1"/>
</dbReference>
<dbReference type="NCBIfam" id="TIGR00962">
    <property type="entry name" value="atpA"/>
    <property type="match status" value="1"/>
</dbReference>
<dbReference type="NCBIfam" id="NF009884">
    <property type="entry name" value="PRK13343.1"/>
    <property type="match status" value="1"/>
</dbReference>
<dbReference type="PANTHER" id="PTHR48082">
    <property type="entry name" value="ATP SYNTHASE SUBUNIT ALPHA, MITOCHONDRIAL"/>
    <property type="match status" value="1"/>
</dbReference>
<dbReference type="PANTHER" id="PTHR48082:SF2">
    <property type="entry name" value="ATP SYNTHASE SUBUNIT ALPHA, MITOCHONDRIAL"/>
    <property type="match status" value="1"/>
</dbReference>
<dbReference type="Pfam" id="PF00006">
    <property type="entry name" value="ATP-synt_ab"/>
    <property type="match status" value="1"/>
</dbReference>
<dbReference type="Pfam" id="PF00306">
    <property type="entry name" value="ATP-synt_ab_C"/>
    <property type="match status" value="1"/>
</dbReference>
<dbReference type="Pfam" id="PF02874">
    <property type="entry name" value="ATP-synt_ab_N"/>
    <property type="match status" value="1"/>
</dbReference>
<dbReference type="SUPFAM" id="SSF47917">
    <property type="entry name" value="C-terminal domain of alpha and beta subunits of F1 ATP synthase"/>
    <property type="match status" value="1"/>
</dbReference>
<dbReference type="SUPFAM" id="SSF50615">
    <property type="entry name" value="N-terminal domain of alpha and beta subunits of F1 ATP synthase"/>
    <property type="match status" value="1"/>
</dbReference>
<dbReference type="SUPFAM" id="SSF52540">
    <property type="entry name" value="P-loop containing nucleoside triphosphate hydrolases"/>
    <property type="match status" value="1"/>
</dbReference>
<dbReference type="PROSITE" id="PS00152">
    <property type="entry name" value="ATPASE_ALPHA_BETA"/>
    <property type="match status" value="1"/>
</dbReference>
<feature type="chain" id="PRO_0000238314" description="ATP synthase subunit alpha 2">
    <location>
        <begin position="1"/>
        <end position="522"/>
    </location>
</feature>
<feature type="binding site" evidence="1">
    <location>
        <begin position="176"/>
        <end position="183"/>
    </location>
    <ligand>
        <name>ATP</name>
        <dbReference type="ChEBI" id="CHEBI:30616"/>
    </ligand>
</feature>
<feature type="site" description="Required for activity" evidence="1">
    <location>
        <position position="369"/>
    </location>
</feature>
<reference key="1">
    <citation type="submission" date="2005-10" db="EMBL/GenBank/DDBJ databases">
        <title>Complete sequence of Pelobacter carbinolicus DSM 2380.</title>
        <authorList>
            <person name="Copeland A."/>
            <person name="Lucas S."/>
            <person name="Lapidus A."/>
            <person name="Barry K."/>
            <person name="Detter J.C."/>
            <person name="Glavina T."/>
            <person name="Hammon N."/>
            <person name="Israni S."/>
            <person name="Pitluck S."/>
            <person name="Chertkov O."/>
            <person name="Schmutz J."/>
            <person name="Larimer F."/>
            <person name="Land M."/>
            <person name="Kyrpides N."/>
            <person name="Ivanova N."/>
            <person name="Richardson P."/>
        </authorList>
    </citation>
    <scope>NUCLEOTIDE SEQUENCE [LARGE SCALE GENOMIC DNA]</scope>
    <source>
        <strain>DSM 2380 / NBRC 103641 / GraBd1</strain>
    </source>
</reference>
<comment type="function">
    <text evidence="1">Produces ATP from ADP in the presence of a proton gradient across the membrane. The alpha chain is a regulatory subunit.</text>
</comment>
<comment type="catalytic activity">
    <reaction evidence="1">
        <text>ATP + H2O + 4 H(+)(in) = ADP + phosphate + 5 H(+)(out)</text>
        <dbReference type="Rhea" id="RHEA:57720"/>
        <dbReference type="ChEBI" id="CHEBI:15377"/>
        <dbReference type="ChEBI" id="CHEBI:15378"/>
        <dbReference type="ChEBI" id="CHEBI:30616"/>
        <dbReference type="ChEBI" id="CHEBI:43474"/>
        <dbReference type="ChEBI" id="CHEBI:456216"/>
        <dbReference type="EC" id="7.1.2.2"/>
    </reaction>
</comment>
<comment type="subunit">
    <text evidence="1">F-type ATPases have 2 components, CF(1) - the catalytic core - and CF(0) - the membrane proton channel. CF(1) has five subunits: alpha(3), beta(3), gamma(1), delta(1), epsilon(1). CF(0) has three main subunits: a(1), b(2) and c(9-12). The alpha and beta chains form an alternating ring which encloses part of the gamma chain. CF(1) is attached to CF(0) by a central stalk formed by the gamma and epsilon chains, while a peripheral stalk is formed by the delta and b chains.</text>
</comment>
<comment type="subcellular location">
    <subcellularLocation>
        <location evidence="1">Cell inner membrane</location>
        <topology evidence="1">Peripheral membrane protein</topology>
    </subcellularLocation>
</comment>
<comment type="similarity">
    <text evidence="1">Belongs to the ATPase alpha/beta chains family.</text>
</comment>
<name>ATPA2_SYNC1</name>
<evidence type="ECO:0000255" key="1">
    <source>
        <dbReference type="HAMAP-Rule" id="MF_01346"/>
    </source>
</evidence>
<protein>
    <recommendedName>
        <fullName evidence="1">ATP synthase subunit alpha 2</fullName>
        <ecNumber evidence="1">7.1.2.2</ecNumber>
    </recommendedName>
    <alternativeName>
        <fullName evidence="1">ATP synthase F1 sector subunit alpha 2</fullName>
    </alternativeName>
    <alternativeName>
        <fullName evidence="1">F-ATPase subunit alpha 2</fullName>
    </alternativeName>
</protein>
<proteinExistence type="inferred from homology"/>
<organism>
    <name type="scientific">Syntrophotalea carbinolica (strain DSM 2380 / NBRC 103641 / GraBd1)</name>
    <name type="common">Pelobacter carbinolicus</name>
    <dbReference type="NCBI Taxonomy" id="338963"/>
    <lineage>
        <taxon>Bacteria</taxon>
        <taxon>Pseudomonadati</taxon>
        <taxon>Thermodesulfobacteriota</taxon>
        <taxon>Desulfuromonadia</taxon>
        <taxon>Desulfuromonadales</taxon>
        <taxon>Syntrophotaleaceae</taxon>
        <taxon>Syntrophotalea</taxon>
    </lineage>
</organism>
<gene>
    <name evidence="1" type="primary">atpA2</name>
    <name type="ordered locus">Pcar_2996</name>
</gene>
<accession>Q3A076</accession>
<sequence>MKDTLPSATQVLKEAFDTLDSALENFSPVLAVQHVGWVEYIGKGIARVGGLPGVRCEELLAFPGGLLGLALDADEDQVGVVLFGDYTHLQAGDEVRRTGRVLDVPVGDGLIGRVVNPVGRCLDGGKPVAFQRQLPVERPAPPIMDRLPVTQPLMTGIKVIDALIPIGRGQRELILGDRQTGKTAIAIDAIINQRDQDVVCIYCAIGQRAASVAGVVTELRNCGALDYTIVVVAEGDAPPGLQYIAPYAATSMAEHFMEHGRDVLIVYDDLTRHARAYREISLLLRRPPGREAFPGDIFYVHSRLLERATHLNEPRGGGSLTALPIIETEAQNLSAYIPTNLISITDGQIYLSPELFQKGLLPSVDVGKSVSRVGGKTQLAAYRAVAGDLRLTYAQFEELEAFARFGTRLDEETRQVLHRGRRVRAILKQTQSSPRTAPQQVLVLHSLNSGVFDTVDEEALPAAEQAICAAVSEIPEIVDKILQGKTLSQEDLDVMHTVAKRVTRPFIKLGEEGHAGAAGDAT</sequence>
<keyword id="KW-0066">ATP synthesis</keyword>
<keyword id="KW-0067">ATP-binding</keyword>
<keyword id="KW-0997">Cell inner membrane</keyword>
<keyword id="KW-1003">Cell membrane</keyword>
<keyword id="KW-0139">CF(1)</keyword>
<keyword id="KW-0375">Hydrogen ion transport</keyword>
<keyword id="KW-0406">Ion transport</keyword>
<keyword id="KW-0472">Membrane</keyword>
<keyword id="KW-0547">Nucleotide-binding</keyword>
<keyword id="KW-1185">Reference proteome</keyword>
<keyword id="KW-1278">Translocase</keyword>
<keyword id="KW-0813">Transport</keyword>